<dbReference type="EMBL" id="AY669508">
    <property type="protein sequence ID" value="AAV74189.1"/>
    <property type="molecule type" value="mRNA"/>
</dbReference>
<dbReference type="EMBL" id="AC051635">
    <property type="status" value="NOT_ANNOTATED_CDS"/>
    <property type="molecule type" value="Genomic_DNA"/>
</dbReference>
<dbReference type="CCDS" id="CCDS62441.1">
    <molecule id="Q2VWA4-2"/>
</dbReference>
<dbReference type="CCDS" id="CCDS74222.1">
    <molecule id="Q2VWA4-1"/>
</dbReference>
<dbReference type="RefSeq" id="NP_001032891.1">
    <molecule id="Q2VWA4-2"/>
    <property type="nucleotide sequence ID" value="NM_001037802.3"/>
</dbReference>
<dbReference type="RefSeq" id="NP_001264992.1">
    <molecule id="Q2VWA4-1"/>
    <property type="nucleotide sequence ID" value="NM_001278063.4"/>
</dbReference>
<dbReference type="RefSeq" id="XP_006722588.1">
    <property type="nucleotide sequence ID" value="XM_006722525.3"/>
</dbReference>
<dbReference type="RefSeq" id="XP_047293713.1">
    <molecule id="Q2VWA4-1"/>
    <property type="nucleotide sequence ID" value="XM_047437757.1"/>
</dbReference>
<dbReference type="SMR" id="Q2VWA4"/>
<dbReference type="BioGRID" id="535036">
    <property type="interactions" value="1"/>
</dbReference>
<dbReference type="FunCoup" id="Q2VWA4">
    <property type="interactions" value="37"/>
</dbReference>
<dbReference type="STRING" id="9606.ENSP00000414750"/>
<dbReference type="iPTMnet" id="Q2VWA4"/>
<dbReference type="PhosphoSitePlus" id="Q2VWA4"/>
<dbReference type="BioMuta" id="SKOR2"/>
<dbReference type="DMDM" id="189082904"/>
<dbReference type="jPOST" id="Q2VWA4"/>
<dbReference type="MassIVE" id="Q2VWA4"/>
<dbReference type="PaxDb" id="9606-ENSP00000483333"/>
<dbReference type="PeptideAtlas" id="Q2VWA4"/>
<dbReference type="ProteomicsDB" id="61524">
    <molecule id="Q2VWA4-1"/>
</dbReference>
<dbReference type="ProteomicsDB" id="61525">
    <molecule id="Q2VWA4-2"/>
</dbReference>
<dbReference type="Antibodypedia" id="58871">
    <property type="antibodies" value="66 antibodies from 14 providers"/>
</dbReference>
<dbReference type="DNASU" id="652991"/>
<dbReference type="Ensembl" id="ENST00000400404.1">
    <molecule id="Q2VWA4-2"/>
    <property type="protein sequence ID" value="ENSP00000383255.1"/>
    <property type="gene ID" value="ENSG00000215474.8"/>
</dbReference>
<dbReference type="Ensembl" id="ENST00000425639.3">
    <molecule id="Q2VWA4-1"/>
    <property type="protein sequence ID" value="ENSP00000414750.3"/>
    <property type="gene ID" value="ENSG00000215474.8"/>
</dbReference>
<dbReference type="Ensembl" id="ENST00000620245.4">
    <molecule id="Q2VWA4-1"/>
    <property type="protein sequence ID" value="ENSP00000483333.1"/>
    <property type="gene ID" value="ENSG00000215474.8"/>
</dbReference>
<dbReference type="GeneID" id="652991"/>
<dbReference type="KEGG" id="hsa:652991"/>
<dbReference type="MANE-Select" id="ENST00000425639.3">
    <property type="protein sequence ID" value="ENSP00000414750.3"/>
    <property type="RefSeq nucleotide sequence ID" value="NM_001278063.4"/>
    <property type="RefSeq protein sequence ID" value="NP_001264992.1"/>
</dbReference>
<dbReference type="UCSC" id="uc010dnt.2">
    <molecule id="Q2VWA4-1"/>
    <property type="organism name" value="human"/>
</dbReference>
<dbReference type="UCSC" id="uc031rif.1">
    <property type="organism name" value="human"/>
</dbReference>
<dbReference type="AGR" id="HGNC:32695"/>
<dbReference type="CTD" id="652991"/>
<dbReference type="DisGeNET" id="652991"/>
<dbReference type="GeneCards" id="SKOR2"/>
<dbReference type="HGNC" id="HGNC:32695">
    <property type="gene designation" value="SKOR2"/>
</dbReference>
<dbReference type="HPA" id="ENSG00000215474">
    <property type="expression patterns" value="Not detected"/>
</dbReference>
<dbReference type="MIM" id="617138">
    <property type="type" value="gene"/>
</dbReference>
<dbReference type="neXtProt" id="NX_Q2VWA4"/>
<dbReference type="OpenTargets" id="ENSG00000215474"/>
<dbReference type="VEuPathDB" id="HostDB:ENSG00000215474"/>
<dbReference type="eggNOG" id="ENOG502QQC2">
    <property type="taxonomic scope" value="Eukaryota"/>
</dbReference>
<dbReference type="GeneTree" id="ENSGT00940000160474"/>
<dbReference type="HOGENOM" id="CLU_011930_1_0_1"/>
<dbReference type="InParanoid" id="Q2VWA4"/>
<dbReference type="OMA" id="SAHPACH"/>
<dbReference type="OrthoDB" id="3938623at2759"/>
<dbReference type="PAN-GO" id="Q2VWA4">
    <property type="GO annotations" value="7 GO annotations based on evolutionary models"/>
</dbReference>
<dbReference type="PhylomeDB" id="Q2VWA4"/>
<dbReference type="TreeFam" id="TF324133"/>
<dbReference type="PathwayCommons" id="Q2VWA4"/>
<dbReference type="SignaLink" id="Q2VWA4"/>
<dbReference type="BioGRID-ORCS" id="652991">
    <property type="hits" value="2 hits in 1017 CRISPR screens"/>
</dbReference>
<dbReference type="ChiTaRS" id="SKOR2">
    <property type="organism name" value="human"/>
</dbReference>
<dbReference type="GenomeRNAi" id="652991"/>
<dbReference type="Pharos" id="Q2VWA4">
    <property type="development level" value="Tbio"/>
</dbReference>
<dbReference type="PRO" id="PR:Q2VWA4"/>
<dbReference type="Proteomes" id="UP000005640">
    <property type="component" value="Chromosome 18"/>
</dbReference>
<dbReference type="RNAct" id="Q2VWA4">
    <property type="molecule type" value="protein"/>
</dbReference>
<dbReference type="Bgee" id="ENSG00000215474">
    <property type="expression patterns" value="Expressed in male germ line stem cell (sensu Vertebrata) in testis and 15 other cell types or tissues"/>
</dbReference>
<dbReference type="ExpressionAtlas" id="Q2VWA4">
    <property type="expression patterns" value="baseline and differential"/>
</dbReference>
<dbReference type="GO" id="GO:0005737">
    <property type="term" value="C:cytoplasm"/>
    <property type="evidence" value="ECO:0000314"/>
    <property type="project" value="UniProtKB"/>
</dbReference>
<dbReference type="GO" id="GO:0005634">
    <property type="term" value="C:nucleus"/>
    <property type="evidence" value="ECO:0000314"/>
    <property type="project" value="UniProtKB"/>
</dbReference>
<dbReference type="GO" id="GO:0005667">
    <property type="term" value="C:transcription regulator complex"/>
    <property type="evidence" value="ECO:0000318"/>
    <property type="project" value="GO_Central"/>
</dbReference>
<dbReference type="GO" id="GO:0003682">
    <property type="term" value="F:chromatin binding"/>
    <property type="evidence" value="ECO:0007669"/>
    <property type="project" value="Ensembl"/>
</dbReference>
<dbReference type="GO" id="GO:0000981">
    <property type="term" value="F:DNA-binding transcription factor activity, RNA polymerase II-specific"/>
    <property type="evidence" value="ECO:0000318"/>
    <property type="project" value="GO_Central"/>
</dbReference>
<dbReference type="GO" id="GO:0042826">
    <property type="term" value="F:histone deacetylase binding"/>
    <property type="evidence" value="ECO:0007669"/>
    <property type="project" value="Ensembl"/>
</dbReference>
<dbReference type="GO" id="GO:0000978">
    <property type="term" value="F:RNA polymerase II cis-regulatory region sequence-specific DNA binding"/>
    <property type="evidence" value="ECO:0000318"/>
    <property type="project" value="GO_Central"/>
</dbReference>
<dbReference type="GO" id="GO:1990837">
    <property type="term" value="F:sequence-specific double-stranded DNA binding"/>
    <property type="evidence" value="ECO:0000314"/>
    <property type="project" value="ARUK-UCL"/>
</dbReference>
<dbReference type="GO" id="GO:0046332">
    <property type="term" value="F:SMAD binding"/>
    <property type="evidence" value="ECO:0000353"/>
    <property type="project" value="UniProtKB"/>
</dbReference>
<dbReference type="GO" id="GO:0048468">
    <property type="term" value="P:cell development"/>
    <property type="evidence" value="ECO:0007669"/>
    <property type="project" value="Ensembl"/>
</dbReference>
<dbReference type="GO" id="GO:0021702">
    <property type="term" value="P:cerebellar Purkinje cell differentiation"/>
    <property type="evidence" value="ECO:0007669"/>
    <property type="project" value="Ensembl"/>
</dbReference>
<dbReference type="GO" id="GO:0030514">
    <property type="term" value="P:negative regulation of BMP signaling pathway"/>
    <property type="evidence" value="ECO:0000318"/>
    <property type="project" value="GO_Central"/>
</dbReference>
<dbReference type="GO" id="GO:0000122">
    <property type="term" value="P:negative regulation of transcription by RNA polymerase II"/>
    <property type="evidence" value="ECO:0000318"/>
    <property type="project" value="GO_Central"/>
</dbReference>
<dbReference type="GO" id="GO:0030512">
    <property type="term" value="P:negative regulation of transforming growth factor beta receptor signaling pathway"/>
    <property type="evidence" value="ECO:0000314"/>
    <property type="project" value="UniProtKB"/>
</dbReference>
<dbReference type="GO" id="GO:0045880">
    <property type="term" value="P:positive regulation of smoothened signaling pathway"/>
    <property type="evidence" value="ECO:0007669"/>
    <property type="project" value="Ensembl"/>
</dbReference>
<dbReference type="GO" id="GO:0021936">
    <property type="term" value="P:regulation of cerebellar granule cell precursor proliferation"/>
    <property type="evidence" value="ECO:0007669"/>
    <property type="project" value="Ensembl"/>
</dbReference>
<dbReference type="GO" id="GO:0048814">
    <property type="term" value="P:regulation of dendrite morphogenesis"/>
    <property type="evidence" value="ECO:0007669"/>
    <property type="project" value="Ensembl"/>
</dbReference>
<dbReference type="GO" id="GO:0006355">
    <property type="term" value="P:regulation of DNA-templated transcription"/>
    <property type="evidence" value="ECO:0000303"/>
    <property type="project" value="UniProtKB"/>
</dbReference>
<dbReference type="GO" id="GO:1902692">
    <property type="term" value="P:regulation of neuroblast proliferation"/>
    <property type="evidence" value="ECO:0007669"/>
    <property type="project" value="Ensembl"/>
</dbReference>
<dbReference type="GO" id="GO:0007224">
    <property type="term" value="P:smoothened signaling pathway"/>
    <property type="evidence" value="ECO:0007669"/>
    <property type="project" value="Ensembl"/>
</dbReference>
<dbReference type="CDD" id="cd21080">
    <property type="entry name" value="DHD_Skor"/>
    <property type="match status" value="1"/>
</dbReference>
<dbReference type="FunFam" id="3.10.390.10:FF:000001">
    <property type="entry name" value="SKI family transcriptional corepressor 1"/>
    <property type="match status" value="1"/>
</dbReference>
<dbReference type="FunFam" id="3.10.260.20:FF:000003">
    <property type="entry name" value="SKI family transcriptional corepressor 1 homolog-B-like"/>
    <property type="match status" value="1"/>
</dbReference>
<dbReference type="Gene3D" id="3.10.390.10">
    <property type="entry name" value="SAND domain-like"/>
    <property type="match status" value="1"/>
</dbReference>
<dbReference type="Gene3D" id="3.10.260.20">
    <property type="entry name" value="Ski"/>
    <property type="match status" value="1"/>
</dbReference>
<dbReference type="InterPro" id="IPR014890">
    <property type="entry name" value="c-SKI_SMAD4-bd_dom"/>
</dbReference>
<dbReference type="InterPro" id="IPR009061">
    <property type="entry name" value="DNA-bd_dom_put_sf"/>
</dbReference>
<dbReference type="InterPro" id="IPR010919">
    <property type="entry name" value="SAND-like_dom_sf"/>
</dbReference>
<dbReference type="InterPro" id="IPR003380">
    <property type="entry name" value="SKI/SNO/DAC"/>
</dbReference>
<dbReference type="InterPro" id="IPR037000">
    <property type="entry name" value="Ski_DNA-bd_sf"/>
</dbReference>
<dbReference type="InterPro" id="IPR023216">
    <property type="entry name" value="Tscrpt_reg_SKI_SnoN"/>
</dbReference>
<dbReference type="PANTHER" id="PTHR10005:SF7">
    <property type="entry name" value="SKI FAMILY TRANSCRIPTIONAL COREPRESSOR 2"/>
    <property type="match status" value="1"/>
</dbReference>
<dbReference type="PANTHER" id="PTHR10005">
    <property type="entry name" value="SKI ONCOGENE-RELATED"/>
    <property type="match status" value="1"/>
</dbReference>
<dbReference type="Pfam" id="PF08782">
    <property type="entry name" value="c-SKI_SMAD_bind"/>
    <property type="match status" value="1"/>
</dbReference>
<dbReference type="Pfam" id="PF02437">
    <property type="entry name" value="Ski_Sno_DHD"/>
    <property type="match status" value="1"/>
</dbReference>
<dbReference type="SMART" id="SM01046">
    <property type="entry name" value="c-SKI_SMAD_bind"/>
    <property type="match status" value="1"/>
</dbReference>
<dbReference type="SUPFAM" id="SSF46955">
    <property type="entry name" value="Putative DNA-binding domain"/>
    <property type="match status" value="1"/>
</dbReference>
<dbReference type="SUPFAM" id="SSF63763">
    <property type="entry name" value="SAND domain-like"/>
    <property type="match status" value="1"/>
</dbReference>
<gene>
    <name evidence="6" type="primary">SKOR2</name>
    <name type="synonym">CORL2</name>
    <name type="synonym">FUSSEL18</name>
</gene>
<protein>
    <recommendedName>
        <fullName evidence="5">SKI family transcriptional corepressor 2</fullName>
    </recommendedName>
    <alternativeName>
        <fullName>Functional Smad-suppressing element on chromosome 18</fullName>
        <shortName>Fussel-18</shortName>
    </alternativeName>
    <alternativeName>
        <fullName>LBX1 corepressor 1-like protein</fullName>
    </alternativeName>
    <alternativeName>
        <fullName>Ladybird homeobox corepressor 1-like protein</fullName>
    </alternativeName>
</protein>
<reference key="1">
    <citation type="journal article" date="2005" name="Lab. Invest.">
        <title>Cloning and functional characterization of a new Ski homolog, Fussel-18, specifically expressed in neuronal tissues.</title>
        <authorList>
            <person name="Arndt S."/>
            <person name="Poser I."/>
            <person name="Schubert T."/>
            <person name="Moser M."/>
            <person name="Bosserhoff A.-K."/>
        </authorList>
    </citation>
    <scope>NUCLEOTIDE SEQUENCE [MRNA] (ISOFORM 2)</scope>
    <scope>TISSUE SPECIFICITY</scope>
    <scope>SUBCELLULAR LOCATION</scope>
    <scope>INTERACTION WITH SMAD2 AND SMAD3</scope>
    <scope>FUNCTION</scope>
</reference>
<reference key="2">
    <citation type="journal article" date="2005" name="Nature">
        <title>DNA sequence and analysis of human chromosome 18.</title>
        <authorList>
            <person name="Nusbaum C."/>
            <person name="Zody M.C."/>
            <person name="Borowsky M.L."/>
            <person name="Kamal M."/>
            <person name="Kodira C.D."/>
            <person name="Taylor T.D."/>
            <person name="Whittaker C.A."/>
            <person name="Chang J.L."/>
            <person name="Cuomo C.A."/>
            <person name="Dewar K."/>
            <person name="FitzGerald M.G."/>
            <person name="Yang X."/>
            <person name="Abouelleil A."/>
            <person name="Allen N.R."/>
            <person name="Anderson S."/>
            <person name="Bloom T."/>
            <person name="Bugalter B."/>
            <person name="Butler J."/>
            <person name="Cook A."/>
            <person name="DeCaprio D."/>
            <person name="Engels R."/>
            <person name="Garber M."/>
            <person name="Gnirke A."/>
            <person name="Hafez N."/>
            <person name="Hall J.L."/>
            <person name="Norman C.H."/>
            <person name="Itoh T."/>
            <person name="Jaffe D.B."/>
            <person name="Kuroki Y."/>
            <person name="Lehoczky J."/>
            <person name="Lui A."/>
            <person name="Macdonald P."/>
            <person name="Mauceli E."/>
            <person name="Mikkelsen T.S."/>
            <person name="Naylor J.W."/>
            <person name="Nicol R."/>
            <person name="Nguyen C."/>
            <person name="Noguchi H."/>
            <person name="O'Leary S.B."/>
            <person name="Piqani B."/>
            <person name="Smith C.L."/>
            <person name="Talamas J.A."/>
            <person name="Topham K."/>
            <person name="Totoki Y."/>
            <person name="Toyoda A."/>
            <person name="Wain H.M."/>
            <person name="Young S.K."/>
            <person name="Zeng Q."/>
            <person name="Zimmer A.R."/>
            <person name="Fujiyama A."/>
            <person name="Hattori M."/>
            <person name="Birren B.W."/>
            <person name="Sakaki Y."/>
            <person name="Lander E.S."/>
        </authorList>
    </citation>
    <scope>NUCLEOTIDE SEQUENCE [LARGE SCALE GENOMIC DNA]</scope>
</reference>
<evidence type="ECO:0000250" key="1"/>
<evidence type="ECO:0000256" key="2">
    <source>
        <dbReference type="SAM" id="MobiDB-lite"/>
    </source>
</evidence>
<evidence type="ECO:0000269" key="3">
    <source>
    </source>
</evidence>
<evidence type="ECO:0000303" key="4">
    <source>
    </source>
</evidence>
<evidence type="ECO:0000305" key="5"/>
<evidence type="ECO:0000312" key="6">
    <source>
        <dbReference type="HGNC" id="HGNC:32695"/>
    </source>
</evidence>
<proteinExistence type="evidence at protein level"/>
<name>SKOR2_HUMAN</name>
<keyword id="KW-0025">Alternative splicing</keyword>
<keyword id="KW-0963">Cytoplasm</keyword>
<keyword id="KW-0539">Nucleus</keyword>
<keyword id="KW-1267">Proteomics identification</keyword>
<keyword id="KW-1185">Reference proteome</keyword>
<keyword id="KW-0678">Repressor</keyword>
<keyword id="KW-0804">Transcription</keyword>
<keyword id="KW-0805">Transcription regulation</keyword>
<organism>
    <name type="scientific">Homo sapiens</name>
    <name type="common">Human</name>
    <dbReference type="NCBI Taxonomy" id="9606"/>
    <lineage>
        <taxon>Eukaryota</taxon>
        <taxon>Metazoa</taxon>
        <taxon>Chordata</taxon>
        <taxon>Craniata</taxon>
        <taxon>Vertebrata</taxon>
        <taxon>Euteleostomi</taxon>
        <taxon>Mammalia</taxon>
        <taxon>Eutheria</taxon>
        <taxon>Euarchontoglires</taxon>
        <taxon>Primates</taxon>
        <taxon>Haplorrhini</taxon>
        <taxon>Catarrhini</taxon>
        <taxon>Hominidae</taxon>
        <taxon>Homo</taxon>
    </lineage>
</organism>
<feature type="chain" id="PRO_0000334611" description="SKI family transcriptional corepressor 2">
    <location>
        <begin position="1"/>
        <end position="1015"/>
    </location>
</feature>
<feature type="region of interest" description="Disordered" evidence="2">
    <location>
        <begin position="280"/>
        <end position="316"/>
    </location>
</feature>
<feature type="region of interest" description="Disordered" evidence="2">
    <location>
        <begin position="518"/>
        <end position="934"/>
    </location>
</feature>
<feature type="compositionally biased region" description="Pro residues" evidence="2">
    <location>
        <begin position="284"/>
        <end position="295"/>
    </location>
</feature>
<feature type="compositionally biased region" description="Low complexity" evidence="2">
    <location>
        <begin position="575"/>
        <end position="600"/>
    </location>
</feature>
<feature type="compositionally biased region" description="Basic and acidic residues" evidence="2">
    <location>
        <begin position="628"/>
        <end position="637"/>
    </location>
</feature>
<feature type="compositionally biased region" description="Basic residues" evidence="2">
    <location>
        <begin position="653"/>
        <end position="669"/>
    </location>
</feature>
<feature type="compositionally biased region" description="Pro residues" evidence="2">
    <location>
        <begin position="670"/>
        <end position="684"/>
    </location>
</feature>
<feature type="compositionally biased region" description="Pro residues" evidence="2">
    <location>
        <begin position="694"/>
        <end position="708"/>
    </location>
</feature>
<feature type="compositionally biased region" description="Acidic residues" evidence="2">
    <location>
        <begin position="730"/>
        <end position="745"/>
    </location>
</feature>
<feature type="compositionally biased region" description="Acidic residues" evidence="2">
    <location>
        <begin position="754"/>
        <end position="774"/>
    </location>
</feature>
<feature type="compositionally biased region" description="Basic and acidic residues" evidence="2">
    <location>
        <begin position="793"/>
        <end position="803"/>
    </location>
</feature>
<feature type="compositionally biased region" description="Pro residues" evidence="2">
    <location>
        <begin position="832"/>
        <end position="842"/>
    </location>
</feature>
<feature type="compositionally biased region" description="Basic and acidic residues" evidence="2">
    <location>
        <begin position="861"/>
        <end position="877"/>
    </location>
</feature>
<feature type="compositionally biased region" description="Basic and acidic residues" evidence="2">
    <location>
        <begin position="885"/>
        <end position="899"/>
    </location>
</feature>
<feature type="compositionally biased region" description="Basic and acidic residues" evidence="2">
    <location>
        <begin position="912"/>
        <end position="922"/>
    </location>
</feature>
<feature type="splice variant" id="VSP_033691" description="In isoform 2." evidence="4">
    <original>VKAAAVAAAAAVAGGGGLLGPHLLGAPPPPPPPPPPLA</original>
    <variation>IRTRSIAFSSQTLMLLEEIFGEKDQEDYMRINEDNIWL</variation>
    <location>
        <begin position="259"/>
        <end position="296"/>
    </location>
</feature>
<feature type="splice variant" id="VSP_033692" description="In isoform 2." evidence="4">
    <location>
        <begin position="297"/>
        <end position="1015"/>
    </location>
</feature>
<feature type="sequence variant" id="VAR_043438" description="In dbSNP:rs7235231.">
    <original>F</original>
    <variation>C</variation>
    <location>
        <position position="947"/>
    </location>
</feature>
<sequence>MASSPLPGPNDILLASPSSAFQPDTLSQPRPGHANLKPNQVGQVILYGIPIVSLVIDGQERLCLAQISNTLLKNFSYNEIHNRRVALGITCVQCTPVQLEILRRAGAMPISSRRCGMITKREAERLCKSFLGENRPPKLPDNFAFDVSHECAWGCRGSFIPARYNSSRAKCIKCSYCNMYFSPNKFIFHSHRTPDAKYTQPDAANFNSWRRHLKLTDKSPQDELVFAWEDVKAMFNGGSRKRALPQPGAHPACHPLSSVKAAAVAAAAAVAGGGGLLGPHLLGAPPPPPPPPPPLAELAGAPHAHHKRPRFDDDDDSLQEAAVVAAASLSAAAASLSVAAASGGAGTGGGGAGGGCVAGVGVGAGAGAGAGAGAKGPRSYPVIPVPSKGSFGGVLQKFPGCGGLFPHPYTFPAAAAAFSLCHKKEDAGAAAEALGGAGAGGAGAAPKAGLSGLFWPAGRKDAFYPPFCMFWPPRTPGGLPVPTYLQPPPQPPSALGCALGESPALLRQAFLDLAEPGGAAGSAEAAPPPGQPPQVVANGPGSGPPPPAGGAGSRDALFESPPGGSGGDCSAGSTPPADSVAAAGAGAAAAGSGPAGSRVPAPHHPHLLEGRKAGGGSYHHSSAFRPVGGKDDAESLAKLHGASAGAPHSAQTHPHHHHHPHHHHHHHHPPQPPSPLLLLPPQPDEPGSERHHPAPPPPPPPPPPPPLAQHPHHRGLLSPGGTSCCYPSEDSSEDEDDEEEEQEVDVEGHKPPEGEEEEEGRDPDDDEEEDEETEVLLGDPLVGGGRFLQGRGPSEKGSSRDRAPAVAGAFPLGLNSSRLLQEDGKLGDPGSDLPPPPPPPLAPQKASGGGSSSPGSPVHHPSLEEQPSYKDSQKTKENNQVIVSTKDDNSFSDKNKEHSFFITDSDASGGDFWRERSGEHTQETNSPHSLKKDVENMGKEELQKVLFEQIDLRRRLEQEFQVLKGNTSFPVFNNFQDQMKRELAYREEMVQQLQIIPYAASLIRKEKLGAHLSKS</sequence>
<comment type="function">
    <text evidence="1 3">Exhibits transcriptional repressor activity (By similarity). Acts as a TGF-beta antagonist in the nervous system.</text>
</comment>
<comment type="subunit">
    <text evidence="3">Interacts with SMAD2 and SMAD3.</text>
</comment>
<comment type="subcellular location">
    <subcellularLocation>
        <location evidence="3">Nucleus</location>
    </subcellularLocation>
    <subcellularLocation>
        <location evidence="3">Cytoplasm</location>
    </subcellularLocation>
</comment>
<comment type="alternative products">
    <event type="alternative splicing"/>
    <isoform>
        <id>Q2VWA4-1</id>
        <name>1</name>
        <sequence type="displayed"/>
    </isoform>
    <isoform>
        <id>Q2VWA4-2</id>
        <name>2</name>
        <sequence type="described" ref="VSP_033691 VSP_033692"/>
    </isoform>
</comment>
<comment type="tissue specificity">
    <text evidence="3">Expressed in cerebellum, spinal cord and testis. Isoform 2 is present in cerebellum (at protein level).</text>
</comment>
<comment type="similarity">
    <text evidence="5">Belongs to the SKI family.</text>
</comment>
<accession>Q2VWA4</accession>
<accession>A0A087X0E6</accession>